<dbReference type="EC" id="3.6.1.1" evidence="1"/>
<dbReference type="EMBL" id="BA000021">
    <property type="protein sequence ID" value="BAC24626.1"/>
    <property type="molecule type" value="Genomic_DNA"/>
</dbReference>
<dbReference type="SMR" id="Q8D274"/>
<dbReference type="STRING" id="36870.gene:10368984"/>
<dbReference type="KEGG" id="wbr:ppa"/>
<dbReference type="eggNOG" id="COG0221">
    <property type="taxonomic scope" value="Bacteria"/>
</dbReference>
<dbReference type="HOGENOM" id="CLU_073198_1_0_6"/>
<dbReference type="OrthoDB" id="5187599at2"/>
<dbReference type="Proteomes" id="UP000000562">
    <property type="component" value="Chromosome"/>
</dbReference>
<dbReference type="GO" id="GO:0005737">
    <property type="term" value="C:cytoplasm"/>
    <property type="evidence" value="ECO:0007669"/>
    <property type="project" value="UniProtKB-SubCell"/>
</dbReference>
<dbReference type="GO" id="GO:0004427">
    <property type="term" value="F:inorganic diphosphate phosphatase activity"/>
    <property type="evidence" value="ECO:0007669"/>
    <property type="project" value="UniProtKB-UniRule"/>
</dbReference>
<dbReference type="GO" id="GO:0000287">
    <property type="term" value="F:magnesium ion binding"/>
    <property type="evidence" value="ECO:0007669"/>
    <property type="project" value="UniProtKB-UniRule"/>
</dbReference>
<dbReference type="GO" id="GO:0006796">
    <property type="term" value="P:phosphate-containing compound metabolic process"/>
    <property type="evidence" value="ECO:0007669"/>
    <property type="project" value="InterPro"/>
</dbReference>
<dbReference type="CDD" id="cd00412">
    <property type="entry name" value="pyrophosphatase"/>
    <property type="match status" value="1"/>
</dbReference>
<dbReference type="FunFam" id="3.90.80.10:FF:000001">
    <property type="entry name" value="Inorganic pyrophosphatase"/>
    <property type="match status" value="1"/>
</dbReference>
<dbReference type="Gene3D" id="3.90.80.10">
    <property type="entry name" value="Inorganic pyrophosphatase"/>
    <property type="match status" value="1"/>
</dbReference>
<dbReference type="HAMAP" id="MF_00209">
    <property type="entry name" value="Inorganic_PPase"/>
    <property type="match status" value="1"/>
</dbReference>
<dbReference type="InterPro" id="IPR008162">
    <property type="entry name" value="Pyrophosphatase"/>
</dbReference>
<dbReference type="InterPro" id="IPR036649">
    <property type="entry name" value="Pyrophosphatase_sf"/>
</dbReference>
<dbReference type="NCBIfam" id="NF002317">
    <property type="entry name" value="PRK01250.1"/>
    <property type="match status" value="1"/>
</dbReference>
<dbReference type="PANTHER" id="PTHR10286">
    <property type="entry name" value="INORGANIC PYROPHOSPHATASE"/>
    <property type="match status" value="1"/>
</dbReference>
<dbReference type="Pfam" id="PF00719">
    <property type="entry name" value="Pyrophosphatase"/>
    <property type="match status" value="1"/>
</dbReference>
<dbReference type="SUPFAM" id="SSF50324">
    <property type="entry name" value="Inorganic pyrophosphatase"/>
    <property type="match status" value="1"/>
</dbReference>
<dbReference type="PROSITE" id="PS00387">
    <property type="entry name" value="PPASE"/>
    <property type="match status" value="1"/>
</dbReference>
<evidence type="ECO:0000255" key="1">
    <source>
        <dbReference type="HAMAP-Rule" id="MF_00209"/>
    </source>
</evidence>
<feature type="chain" id="PRO_0000137543" description="Inorganic pyrophosphatase">
    <location>
        <begin position="1"/>
        <end position="179"/>
    </location>
</feature>
<feature type="binding site" evidence="1">
    <location>
        <position position="30"/>
    </location>
    <ligand>
        <name>substrate</name>
    </ligand>
</feature>
<feature type="binding site" evidence="1">
    <location>
        <position position="44"/>
    </location>
    <ligand>
        <name>substrate</name>
    </ligand>
</feature>
<feature type="binding site" evidence="1">
    <location>
        <position position="56"/>
    </location>
    <ligand>
        <name>substrate</name>
    </ligand>
</feature>
<feature type="binding site" evidence="1">
    <location>
        <position position="66"/>
    </location>
    <ligand>
        <name>Mg(2+)</name>
        <dbReference type="ChEBI" id="CHEBI:18420"/>
        <label>1</label>
    </ligand>
</feature>
<feature type="binding site" evidence="1">
    <location>
        <position position="71"/>
    </location>
    <ligand>
        <name>Mg(2+)</name>
        <dbReference type="ChEBI" id="CHEBI:18420"/>
        <label>1</label>
    </ligand>
</feature>
<feature type="binding site" evidence="1">
    <location>
        <position position="71"/>
    </location>
    <ligand>
        <name>Mg(2+)</name>
        <dbReference type="ChEBI" id="CHEBI:18420"/>
        <label>2</label>
    </ligand>
</feature>
<feature type="binding site" evidence="1">
    <location>
        <position position="103"/>
    </location>
    <ligand>
        <name>Mg(2+)</name>
        <dbReference type="ChEBI" id="CHEBI:18420"/>
        <label>1</label>
    </ligand>
</feature>
<feature type="binding site" evidence="1">
    <location>
        <position position="143"/>
    </location>
    <ligand>
        <name>substrate</name>
    </ligand>
</feature>
<reference key="1">
    <citation type="journal article" date="2002" name="Nat. Genet.">
        <title>Genome sequence of the endocellular obligate symbiont of tsetse flies, Wigglesworthia glossinidia.</title>
        <authorList>
            <person name="Akman L."/>
            <person name="Yamashita A."/>
            <person name="Watanabe H."/>
            <person name="Oshima K."/>
            <person name="Shiba T."/>
            <person name="Hattori M."/>
            <person name="Aksoy S."/>
        </authorList>
    </citation>
    <scope>NUCLEOTIDE SEQUENCE [LARGE SCALE GENOMIC DNA]</scope>
</reference>
<sequence length="179" mass="20396">MNLNSVPAGEKLPNDIYAIIEIPTNSNPIKYEVDKKTGILFVNRFIPTSMFYPCNYGYINHTISLDGDPLDILVPTPYPVLHGSVIRCNPIGVLKMIDESGEDAKIIAMPHQKLLAGYNNNIKNIDDISNLMKSQISHFFEHYKDLEKKKWTKVISWEDVKSAEKEILSSFNRKKTLNI</sequence>
<keyword id="KW-0963">Cytoplasm</keyword>
<keyword id="KW-0378">Hydrolase</keyword>
<keyword id="KW-0460">Magnesium</keyword>
<keyword id="KW-0479">Metal-binding</keyword>
<keyword id="KW-1185">Reference proteome</keyword>
<proteinExistence type="inferred from homology"/>
<gene>
    <name evidence="1" type="primary">ppa</name>
    <name type="ordered locus">WIGBR4800</name>
</gene>
<accession>Q8D274</accession>
<name>IPYR_WIGBR</name>
<comment type="function">
    <text evidence="1">Catalyzes the hydrolysis of inorganic pyrophosphate (PPi) forming two phosphate ions.</text>
</comment>
<comment type="catalytic activity">
    <reaction evidence="1">
        <text>diphosphate + H2O = 2 phosphate + H(+)</text>
        <dbReference type="Rhea" id="RHEA:24576"/>
        <dbReference type="ChEBI" id="CHEBI:15377"/>
        <dbReference type="ChEBI" id="CHEBI:15378"/>
        <dbReference type="ChEBI" id="CHEBI:33019"/>
        <dbReference type="ChEBI" id="CHEBI:43474"/>
        <dbReference type="EC" id="3.6.1.1"/>
    </reaction>
</comment>
<comment type="cofactor">
    <cofactor evidence="1">
        <name>Mg(2+)</name>
        <dbReference type="ChEBI" id="CHEBI:18420"/>
    </cofactor>
</comment>
<comment type="subunit">
    <text evidence="1">Homohexamer.</text>
</comment>
<comment type="subcellular location">
    <subcellularLocation>
        <location evidence="1">Cytoplasm</location>
    </subcellularLocation>
</comment>
<comment type="similarity">
    <text evidence="1">Belongs to the PPase family.</text>
</comment>
<organism>
    <name type="scientific">Wigglesworthia glossinidia brevipalpis</name>
    <dbReference type="NCBI Taxonomy" id="36870"/>
    <lineage>
        <taxon>Bacteria</taxon>
        <taxon>Pseudomonadati</taxon>
        <taxon>Pseudomonadota</taxon>
        <taxon>Gammaproteobacteria</taxon>
        <taxon>Enterobacterales</taxon>
        <taxon>Erwiniaceae</taxon>
        <taxon>Wigglesworthia</taxon>
    </lineage>
</organism>
<protein>
    <recommendedName>
        <fullName evidence="1">Inorganic pyrophosphatase</fullName>
        <ecNumber evidence="1">3.6.1.1</ecNumber>
    </recommendedName>
    <alternativeName>
        <fullName evidence="1">Pyrophosphate phospho-hydrolase</fullName>
        <shortName evidence="1">PPase</shortName>
    </alternativeName>
</protein>